<sequence length="553" mass="64849">MSTSRLQQQFIRLWQRYNGQSTETTLQALAEVLNCSRRHVRSLLGKMQHAGWLDWQAEAGRGKRSQLIFLRSGLALQQQRAEELLEQDHIDQLVQLVGDKKAVRQMLLSQLGRSFRQGKHILRVLYYRPLENLLPGTALRRSETHMVRQIFNGLTRINEENGELEPDLSHHWQAITPLHWRFYLRPAIHFHHGRELEMSDVISSLTRLIPQPLFSHIAEVRSPTPYVIDVYLHSPDHWLPWLLGSVHAMILPQEWETQPDFHRQPIGTGPYSVIRNHHSQLKIQAFDNYFGFRALIDEVNIWVLPELSEELVYSGVQLQADDTGKNELESRLEEGCYFLLFDQRSPQACTPEIRRWLCELITPIALLSHAAPFYQRYWSPAYGMLPRWHHNRLTTQEPKPEGLNELTLTFYSEHSEFDAISQTLTQLLAAQGVTLKIQVLDYTRWYQGDAQSDIWLGSANFYLPLEFSLFATLYEMPLLQHCLSEELHQDIESWRNNTLLMADWSQRLVSQHQFHPLFHHWLELYGQHSMRGVRMNTLGWFDFKSAWFTPPEA</sequence>
<evidence type="ECO:0000255" key="1">
    <source>
        <dbReference type="HAMAP-Rule" id="MF_01449"/>
    </source>
</evidence>
<comment type="function">
    <text evidence="1">Activates the small RNA gene sgrS under glucose-phosphate stress conditions as well as yfdZ. Represses its own transcription under both stress and non-stress conditions. Might act as a sensor of the intracellular accumulation of phosphoglucose by binding these molecules in its C-terminal solute-binding domain.</text>
</comment>
<keyword id="KW-0010">Activator</keyword>
<keyword id="KW-0238">DNA-binding</keyword>
<keyword id="KW-0678">Repressor</keyword>
<keyword id="KW-0804">Transcription</keyword>
<keyword id="KW-0805">Transcription regulation</keyword>
<organism>
    <name type="scientific">Yersinia pestis (strain Pestoides F)</name>
    <dbReference type="NCBI Taxonomy" id="386656"/>
    <lineage>
        <taxon>Bacteria</taxon>
        <taxon>Pseudomonadati</taxon>
        <taxon>Pseudomonadota</taxon>
        <taxon>Gammaproteobacteria</taxon>
        <taxon>Enterobacterales</taxon>
        <taxon>Yersiniaceae</taxon>
        <taxon>Yersinia</taxon>
    </lineage>
</organism>
<gene>
    <name evidence="1" type="primary">sgrR</name>
    <name type="ordered locus">YPDSF_3111</name>
</gene>
<reference key="1">
    <citation type="submission" date="2007-02" db="EMBL/GenBank/DDBJ databases">
        <title>Complete sequence of chromosome of Yersinia pestis Pestoides F.</title>
        <authorList>
            <consortium name="US DOE Joint Genome Institute"/>
            <person name="Copeland A."/>
            <person name="Lucas S."/>
            <person name="Lapidus A."/>
            <person name="Barry K."/>
            <person name="Detter J.C."/>
            <person name="Glavina del Rio T."/>
            <person name="Hammon N."/>
            <person name="Israni S."/>
            <person name="Dalin E."/>
            <person name="Tice H."/>
            <person name="Pitluck S."/>
            <person name="Di Bartolo G."/>
            <person name="Chain P."/>
            <person name="Malfatti S."/>
            <person name="Shin M."/>
            <person name="Vergez L."/>
            <person name="Schmutz J."/>
            <person name="Larimer F."/>
            <person name="Land M."/>
            <person name="Hauser L."/>
            <person name="Worsham P."/>
            <person name="Chu M."/>
            <person name="Bearden S."/>
            <person name="Garcia E."/>
            <person name="Richardson P."/>
        </authorList>
    </citation>
    <scope>NUCLEOTIDE SEQUENCE [LARGE SCALE GENOMIC DNA]</scope>
    <source>
        <strain>Pestoides F</strain>
    </source>
</reference>
<proteinExistence type="inferred from homology"/>
<feature type="chain" id="PRO_0000309260" description="HTH-type transcriptional regulator SgrR">
    <location>
        <begin position="1"/>
        <end position="553"/>
    </location>
</feature>
<feature type="domain" description="HTH marR-type" evidence="1">
    <location>
        <begin position="1"/>
        <end position="113"/>
    </location>
</feature>
<feature type="DNA-binding region" description="H-T-H motif" evidence="1">
    <location>
        <begin position="26"/>
        <end position="49"/>
    </location>
</feature>
<feature type="region of interest" description="Solute-binding" evidence="1">
    <location>
        <begin position="163"/>
        <end position="494"/>
    </location>
</feature>
<protein>
    <recommendedName>
        <fullName evidence="1">HTH-type transcriptional regulator SgrR</fullName>
    </recommendedName>
</protein>
<name>SGRR_YERPP</name>
<dbReference type="EMBL" id="CP000668">
    <property type="protein sequence ID" value="ABP41469.1"/>
    <property type="molecule type" value="Genomic_DNA"/>
</dbReference>
<dbReference type="RefSeq" id="WP_002210461.1">
    <property type="nucleotide sequence ID" value="NZ_CP009715.1"/>
</dbReference>
<dbReference type="SMR" id="A4TQA7"/>
<dbReference type="GeneID" id="57974087"/>
<dbReference type="KEGG" id="ypp:YPDSF_3111"/>
<dbReference type="PATRIC" id="fig|386656.14.peg.1246"/>
<dbReference type="GO" id="GO:0003677">
    <property type="term" value="F:DNA binding"/>
    <property type="evidence" value="ECO:0007669"/>
    <property type="project" value="UniProtKB-KW"/>
</dbReference>
<dbReference type="GO" id="GO:1904680">
    <property type="term" value="F:peptide transmembrane transporter activity"/>
    <property type="evidence" value="ECO:0007669"/>
    <property type="project" value="TreeGrafter"/>
</dbReference>
<dbReference type="GO" id="GO:0045892">
    <property type="term" value="P:negative regulation of DNA-templated transcription"/>
    <property type="evidence" value="ECO:0007669"/>
    <property type="project" value="UniProtKB-UniRule"/>
</dbReference>
<dbReference type="GO" id="GO:0015833">
    <property type="term" value="P:peptide transport"/>
    <property type="evidence" value="ECO:0007669"/>
    <property type="project" value="TreeGrafter"/>
</dbReference>
<dbReference type="GO" id="GO:0045893">
    <property type="term" value="P:positive regulation of DNA-templated transcription"/>
    <property type="evidence" value="ECO:0007669"/>
    <property type="project" value="UniProtKB-UniRule"/>
</dbReference>
<dbReference type="CDD" id="cd08507">
    <property type="entry name" value="PBP2_SgrR_like"/>
    <property type="match status" value="1"/>
</dbReference>
<dbReference type="FunFam" id="3.40.190.10:FF:000070">
    <property type="entry name" value="HTH-type transcriptional regulator SgrR"/>
    <property type="match status" value="1"/>
</dbReference>
<dbReference type="Gene3D" id="3.40.190.10">
    <property type="entry name" value="Periplasmic binding protein-like II"/>
    <property type="match status" value="1"/>
</dbReference>
<dbReference type="HAMAP" id="MF_01449">
    <property type="entry name" value="HTH_type_SgrR"/>
    <property type="match status" value="1"/>
</dbReference>
<dbReference type="InterPro" id="IPR039424">
    <property type="entry name" value="SBP_5"/>
</dbReference>
<dbReference type="InterPro" id="IPR000914">
    <property type="entry name" value="SBP_5_dom"/>
</dbReference>
<dbReference type="InterPro" id="IPR025370">
    <property type="entry name" value="SgrR_HTH_N"/>
</dbReference>
<dbReference type="InterPro" id="IPR023767">
    <property type="entry name" value="Tscrpt_reg_SgrR"/>
</dbReference>
<dbReference type="InterPro" id="IPR036390">
    <property type="entry name" value="WH_DNA-bd_sf"/>
</dbReference>
<dbReference type="NCBIfam" id="NF010149">
    <property type="entry name" value="PRK13626.1"/>
    <property type="match status" value="1"/>
</dbReference>
<dbReference type="PANTHER" id="PTHR30290:SF72">
    <property type="entry name" value="HTH-TYPE TRANSCRIPTIONAL REGULATOR SGRR"/>
    <property type="match status" value="1"/>
</dbReference>
<dbReference type="PANTHER" id="PTHR30290">
    <property type="entry name" value="PERIPLASMIC BINDING COMPONENT OF ABC TRANSPORTER"/>
    <property type="match status" value="1"/>
</dbReference>
<dbReference type="Pfam" id="PF00496">
    <property type="entry name" value="SBP_bac_5"/>
    <property type="match status" value="1"/>
</dbReference>
<dbReference type="Pfam" id="PF12793">
    <property type="entry name" value="SgrR_N"/>
    <property type="match status" value="1"/>
</dbReference>
<dbReference type="SUPFAM" id="SSF53850">
    <property type="entry name" value="Periplasmic binding protein-like II"/>
    <property type="match status" value="1"/>
</dbReference>
<dbReference type="SUPFAM" id="SSF46785">
    <property type="entry name" value="Winged helix' DNA-binding domain"/>
    <property type="match status" value="1"/>
</dbReference>
<accession>A4TQA7</accession>